<evidence type="ECO:0000255" key="1">
    <source>
        <dbReference type="HAMAP-Rule" id="MF_00381"/>
    </source>
</evidence>
<evidence type="ECO:0000256" key="2">
    <source>
        <dbReference type="SAM" id="MobiDB-lite"/>
    </source>
</evidence>
<protein>
    <recommendedName>
        <fullName evidence="1">Integration host factor subunit beta</fullName>
        <shortName evidence="1">IHF-beta</shortName>
    </recommendedName>
</protein>
<organism>
    <name type="scientific">Paraburkholderia xenovorans (strain LB400)</name>
    <dbReference type="NCBI Taxonomy" id="266265"/>
    <lineage>
        <taxon>Bacteria</taxon>
        <taxon>Pseudomonadati</taxon>
        <taxon>Pseudomonadota</taxon>
        <taxon>Betaproteobacteria</taxon>
        <taxon>Burkholderiales</taxon>
        <taxon>Burkholderiaceae</taxon>
        <taxon>Paraburkholderia</taxon>
    </lineage>
</organism>
<sequence>MTKSELVAQLATRFPQLVLKDADFAVKTMLDAMSEALANGHRIEIRGFGSFGLNRRPSRVGRNPKSGEKVLVPEKYVPHFKPGKELRERVDRRAGEPLKAEDPDDDL</sequence>
<keyword id="KW-0233">DNA recombination</keyword>
<keyword id="KW-0238">DNA-binding</keyword>
<keyword id="KW-1185">Reference proteome</keyword>
<keyword id="KW-0804">Transcription</keyword>
<keyword id="KW-0805">Transcription regulation</keyword>
<keyword id="KW-0810">Translation regulation</keyword>
<accession>Q13VC5</accession>
<name>IHFB_PARXL</name>
<proteinExistence type="inferred from homology"/>
<comment type="function">
    <text evidence="1">This protein is one of the two subunits of integration host factor, a specific DNA-binding protein that functions in genetic recombination as well as in transcriptional and translational control.</text>
</comment>
<comment type="subunit">
    <text evidence="1">Heterodimer of an alpha and a beta chain.</text>
</comment>
<comment type="similarity">
    <text evidence="1">Belongs to the bacterial histone-like protein family.</text>
</comment>
<dbReference type="EMBL" id="CP000270">
    <property type="protein sequence ID" value="ABE31964.1"/>
    <property type="molecule type" value="Genomic_DNA"/>
</dbReference>
<dbReference type="RefSeq" id="WP_011489478.1">
    <property type="nucleotide sequence ID" value="NC_007951.1"/>
</dbReference>
<dbReference type="SMR" id="Q13VC5"/>
<dbReference type="STRING" id="266265.Bxe_A0983"/>
<dbReference type="KEGG" id="bxb:DR64_3144"/>
<dbReference type="KEGG" id="bxe:Bxe_A0983"/>
<dbReference type="PATRIC" id="fig|266265.5.peg.3598"/>
<dbReference type="eggNOG" id="COG0776">
    <property type="taxonomic scope" value="Bacteria"/>
</dbReference>
<dbReference type="OrthoDB" id="9804203at2"/>
<dbReference type="Proteomes" id="UP000001817">
    <property type="component" value="Chromosome 1"/>
</dbReference>
<dbReference type="GO" id="GO:0005694">
    <property type="term" value="C:chromosome"/>
    <property type="evidence" value="ECO:0007669"/>
    <property type="project" value="InterPro"/>
</dbReference>
<dbReference type="GO" id="GO:0005829">
    <property type="term" value="C:cytosol"/>
    <property type="evidence" value="ECO:0007669"/>
    <property type="project" value="TreeGrafter"/>
</dbReference>
<dbReference type="GO" id="GO:0003677">
    <property type="term" value="F:DNA binding"/>
    <property type="evidence" value="ECO:0007669"/>
    <property type="project" value="UniProtKB-UniRule"/>
</dbReference>
<dbReference type="GO" id="GO:0030527">
    <property type="term" value="F:structural constituent of chromatin"/>
    <property type="evidence" value="ECO:0007669"/>
    <property type="project" value="InterPro"/>
</dbReference>
<dbReference type="GO" id="GO:0006310">
    <property type="term" value="P:DNA recombination"/>
    <property type="evidence" value="ECO:0007669"/>
    <property type="project" value="UniProtKB-UniRule"/>
</dbReference>
<dbReference type="GO" id="GO:0006355">
    <property type="term" value="P:regulation of DNA-templated transcription"/>
    <property type="evidence" value="ECO:0007669"/>
    <property type="project" value="UniProtKB-UniRule"/>
</dbReference>
<dbReference type="GO" id="GO:0006417">
    <property type="term" value="P:regulation of translation"/>
    <property type="evidence" value="ECO:0007669"/>
    <property type="project" value="UniProtKB-UniRule"/>
</dbReference>
<dbReference type="CDD" id="cd13836">
    <property type="entry name" value="IHF_B"/>
    <property type="match status" value="1"/>
</dbReference>
<dbReference type="Gene3D" id="4.10.520.10">
    <property type="entry name" value="IHF-like DNA-binding proteins"/>
    <property type="match status" value="1"/>
</dbReference>
<dbReference type="HAMAP" id="MF_00381">
    <property type="entry name" value="IHF_beta"/>
    <property type="match status" value="1"/>
</dbReference>
<dbReference type="InterPro" id="IPR000119">
    <property type="entry name" value="Hist_DNA-bd"/>
</dbReference>
<dbReference type="InterPro" id="IPR010992">
    <property type="entry name" value="IHF-like_DNA-bd_dom_sf"/>
</dbReference>
<dbReference type="InterPro" id="IPR005685">
    <property type="entry name" value="IHF_beta"/>
</dbReference>
<dbReference type="NCBIfam" id="TIGR00988">
    <property type="entry name" value="hip"/>
    <property type="match status" value="1"/>
</dbReference>
<dbReference type="NCBIfam" id="NF001222">
    <property type="entry name" value="PRK00199.1"/>
    <property type="match status" value="1"/>
</dbReference>
<dbReference type="PANTHER" id="PTHR33175">
    <property type="entry name" value="DNA-BINDING PROTEIN HU"/>
    <property type="match status" value="1"/>
</dbReference>
<dbReference type="PANTHER" id="PTHR33175:SF5">
    <property type="entry name" value="INTEGRATION HOST FACTOR SUBUNIT BETA"/>
    <property type="match status" value="1"/>
</dbReference>
<dbReference type="Pfam" id="PF00216">
    <property type="entry name" value="Bac_DNA_binding"/>
    <property type="match status" value="1"/>
</dbReference>
<dbReference type="PRINTS" id="PR01727">
    <property type="entry name" value="DNABINDINGHU"/>
</dbReference>
<dbReference type="SMART" id="SM00411">
    <property type="entry name" value="BHL"/>
    <property type="match status" value="1"/>
</dbReference>
<dbReference type="SUPFAM" id="SSF47729">
    <property type="entry name" value="IHF-like DNA-binding proteins"/>
    <property type="match status" value="1"/>
</dbReference>
<reference key="1">
    <citation type="journal article" date="2006" name="Proc. Natl. Acad. Sci. U.S.A.">
        <title>Burkholderia xenovorans LB400 harbors a multi-replicon, 9.73-Mbp genome shaped for versatility.</title>
        <authorList>
            <person name="Chain P.S.G."/>
            <person name="Denef V.J."/>
            <person name="Konstantinidis K.T."/>
            <person name="Vergez L.M."/>
            <person name="Agullo L."/>
            <person name="Reyes V.L."/>
            <person name="Hauser L."/>
            <person name="Cordova M."/>
            <person name="Gomez L."/>
            <person name="Gonzalez M."/>
            <person name="Land M."/>
            <person name="Lao V."/>
            <person name="Larimer F."/>
            <person name="LiPuma J.J."/>
            <person name="Mahenthiralingam E."/>
            <person name="Malfatti S.A."/>
            <person name="Marx C.J."/>
            <person name="Parnell J.J."/>
            <person name="Ramette A."/>
            <person name="Richardson P."/>
            <person name="Seeger M."/>
            <person name="Smith D."/>
            <person name="Spilker T."/>
            <person name="Sul W.J."/>
            <person name="Tsoi T.V."/>
            <person name="Ulrich L.E."/>
            <person name="Zhulin I.B."/>
            <person name="Tiedje J.M."/>
        </authorList>
    </citation>
    <scope>NUCLEOTIDE SEQUENCE [LARGE SCALE GENOMIC DNA]</scope>
    <source>
        <strain>LB400</strain>
    </source>
</reference>
<feature type="chain" id="PRO_1000122207" description="Integration host factor subunit beta">
    <location>
        <begin position="1"/>
        <end position="107"/>
    </location>
</feature>
<feature type="region of interest" description="Disordered" evidence="2">
    <location>
        <begin position="82"/>
        <end position="107"/>
    </location>
</feature>
<feature type="compositionally biased region" description="Basic and acidic residues" evidence="2">
    <location>
        <begin position="82"/>
        <end position="101"/>
    </location>
</feature>
<gene>
    <name evidence="1" type="primary">ihfB</name>
    <name evidence="1" type="synonym">himD</name>
    <name type="ordered locus">Bxeno_A3426</name>
    <name type="ORF">Bxe_A0983</name>
</gene>